<protein>
    <recommendedName>
        <fullName evidence="4">Nuclear transport factor 2</fullName>
        <shortName>NTF-2</shortName>
    </recommendedName>
</protein>
<feature type="chain" id="PRO_0000194776" description="Nuclear transport factor 2">
    <location>
        <begin position="1"/>
        <end position="127"/>
    </location>
</feature>
<feature type="domain" description="NTF2" evidence="3">
    <location>
        <begin position="10"/>
        <end position="121"/>
    </location>
</feature>
<feature type="modified residue" description="N6-acetyllysine" evidence="1">
    <location>
        <position position="4"/>
    </location>
</feature>
<evidence type="ECO:0000250" key="1">
    <source>
        <dbReference type="UniProtKB" id="P61970"/>
    </source>
</evidence>
<evidence type="ECO:0000250" key="2">
    <source>
        <dbReference type="UniProtKB" id="P61972"/>
    </source>
</evidence>
<evidence type="ECO:0000255" key="3">
    <source>
        <dbReference type="PROSITE-ProRule" id="PRU00137"/>
    </source>
</evidence>
<evidence type="ECO:0000305" key="4"/>
<evidence type="ECO:0000312" key="5">
    <source>
        <dbReference type="MGI" id="MGI:1915301"/>
    </source>
</evidence>
<gene>
    <name evidence="5" type="primary">Nutf2</name>
    <name evidence="2" type="synonym">Ntf2</name>
</gene>
<reference key="1">
    <citation type="journal article" date="2005" name="Science">
        <title>The transcriptional landscape of the mammalian genome.</title>
        <authorList>
            <person name="Carninci P."/>
            <person name="Kasukawa T."/>
            <person name="Katayama S."/>
            <person name="Gough J."/>
            <person name="Frith M.C."/>
            <person name="Maeda N."/>
            <person name="Oyama R."/>
            <person name="Ravasi T."/>
            <person name="Lenhard B."/>
            <person name="Wells C."/>
            <person name="Kodzius R."/>
            <person name="Shimokawa K."/>
            <person name="Bajic V.B."/>
            <person name="Brenner S.E."/>
            <person name="Batalov S."/>
            <person name="Forrest A.R."/>
            <person name="Zavolan M."/>
            <person name="Davis M.J."/>
            <person name="Wilming L.G."/>
            <person name="Aidinis V."/>
            <person name="Allen J.E."/>
            <person name="Ambesi-Impiombato A."/>
            <person name="Apweiler R."/>
            <person name="Aturaliya R.N."/>
            <person name="Bailey T.L."/>
            <person name="Bansal M."/>
            <person name="Baxter L."/>
            <person name="Beisel K.W."/>
            <person name="Bersano T."/>
            <person name="Bono H."/>
            <person name="Chalk A.M."/>
            <person name="Chiu K.P."/>
            <person name="Choudhary V."/>
            <person name="Christoffels A."/>
            <person name="Clutterbuck D.R."/>
            <person name="Crowe M.L."/>
            <person name="Dalla E."/>
            <person name="Dalrymple B.P."/>
            <person name="de Bono B."/>
            <person name="Della Gatta G."/>
            <person name="di Bernardo D."/>
            <person name="Down T."/>
            <person name="Engstrom P."/>
            <person name="Fagiolini M."/>
            <person name="Faulkner G."/>
            <person name="Fletcher C.F."/>
            <person name="Fukushima T."/>
            <person name="Furuno M."/>
            <person name="Futaki S."/>
            <person name="Gariboldi M."/>
            <person name="Georgii-Hemming P."/>
            <person name="Gingeras T.R."/>
            <person name="Gojobori T."/>
            <person name="Green R.E."/>
            <person name="Gustincich S."/>
            <person name="Harbers M."/>
            <person name="Hayashi Y."/>
            <person name="Hensch T.K."/>
            <person name="Hirokawa N."/>
            <person name="Hill D."/>
            <person name="Huminiecki L."/>
            <person name="Iacono M."/>
            <person name="Ikeo K."/>
            <person name="Iwama A."/>
            <person name="Ishikawa T."/>
            <person name="Jakt M."/>
            <person name="Kanapin A."/>
            <person name="Katoh M."/>
            <person name="Kawasawa Y."/>
            <person name="Kelso J."/>
            <person name="Kitamura H."/>
            <person name="Kitano H."/>
            <person name="Kollias G."/>
            <person name="Krishnan S.P."/>
            <person name="Kruger A."/>
            <person name="Kummerfeld S.K."/>
            <person name="Kurochkin I.V."/>
            <person name="Lareau L.F."/>
            <person name="Lazarevic D."/>
            <person name="Lipovich L."/>
            <person name="Liu J."/>
            <person name="Liuni S."/>
            <person name="McWilliam S."/>
            <person name="Madan Babu M."/>
            <person name="Madera M."/>
            <person name="Marchionni L."/>
            <person name="Matsuda H."/>
            <person name="Matsuzawa S."/>
            <person name="Miki H."/>
            <person name="Mignone F."/>
            <person name="Miyake S."/>
            <person name="Morris K."/>
            <person name="Mottagui-Tabar S."/>
            <person name="Mulder N."/>
            <person name="Nakano N."/>
            <person name="Nakauchi H."/>
            <person name="Ng P."/>
            <person name="Nilsson R."/>
            <person name="Nishiguchi S."/>
            <person name="Nishikawa S."/>
            <person name="Nori F."/>
            <person name="Ohara O."/>
            <person name="Okazaki Y."/>
            <person name="Orlando V."/>
            <person name="Pang K.C."/>
            <person name="Pavan W.J."/>
            <person name="Pavesi G."/>
            <person name="Pesole G."/>
            <person name="Petrovsky N."/>
            <person name="Piazza S."/>
            <person name="Reed J."/>
            <person name="Reid J.F."/>
            <person name="Ring B.Z."/>
            <person name="Ringwald M."/>
            <person name="Rost B."/>
            <person name="Ruan Y."/>
            <person name="Salzberg S.L."/>
            <person name="Sandelin A."/>
            <person name="Schneider C."/>
            <person name="Schoenbach C."/>
            <person name="Sekiguchi K."/>
            <person name="Semple C.A."/>
            <person name="Seno S."/>
            <person name="Sessa L."/>
            <person name="Sheng Y."/>
            <person name="Shibata Y."/>
            <person name="Shimada H."/>
            <person name="Shimada K."/>
            <person name="Silva D."/>
            <person name="Sinclair B."/>
            <person name="Sperling S."/>
            <person name="Stupka E."/>
            <person name="Sugiura K."/>
            <person name="Sultana R."/>
            <person name="Takenaka Y."/>
            <person name="Taki K."/>
            <person name="Tammoja K."/>
            <person name="Tan S.L."/>
            <person name="Tang S."/>
            <person name="Taylor M.S."/>
            <person name="Tegner J."/>
            <person name="Teichmann S.A."/>
            <person name="Ueda H.R."/>
            <person name="van Nimwegen E."/>
            <person name="Verardo R."/>
            <person name="Wei C.L."/>
            <person name="Yagi K."/>
            <person name="Yamanishi H."/>
            <person name="Zabarovsky E."/>
            <person name="Zhu S."/>
            <person name="Zimmer A."/>
            <person name="Hide W."/>
            <person name="Bult C."/>
            <person name="Grimmond S.M."/>
            <person name="Teasdale R.D."/>
            <person name="Liu E.T."/>
            <person name="Brusic V."/>
            <person name="Quackenbush J."/>
            <person name="Wahlestedt C."/>
            <person name="Mattick J.S."/>
            <person name="Hume D.A."/>
            <person name="Kai C."/>
            <person name="Sasaki D."/>
            <person name="Tomaru Y."/>
            <person name="Fukuda S."/>
            <person name="Kanamori-Katayama M."/>
            <person name="Suzuki M."/>
            <person name="Aoki J."/>
            <person name="Arakawa T."/>
            <person name="Iida J."/>
            <person name="Imamura K."/>
            <person name="Itoh M."/>
            <person name="Kato T."/>
            <person name="Kawaji H."/>
            <person name="Kawagashira N."/>
            <person name="Kawashima T."/>
            <person name="Kojima M."/>
            <person name="Kondo S."/>
            <person name="Konno H."/>
            <person name="Nakano K."/>
            <person name="Ninomiya N."/>
            <person name="Nishio T."/>
            <person name="Okada M."/>
            <person name="Plessy C."/>
            <person name="Shibata K."/>
            <person name="Shiraki T."/>
            <person name="Suzuki S."/>
            <person name="Tagami M."/>
            <person name="Waki K."/>
            <person name="Watahiki A."/>
            <person name="Okamura-Oho Y."/>
            <person name="Suzuki H."/>
            <person name="Kawai J."/>
            <person name="Hayashizaki Y."/>
        </authorList>
    </citation>
    <scope>NUCLEOTIDE SEQUENCE [LARGE SCALE MRNA]</scope>
    <source>
        <strain>C57BL/6J</strain>
        <strain>DBA/2J</strain>
        <tissue>Kidney</tissue>
    </source>
</reference>
<reference key="2">
    <citation type="journal article" date="2004" name="Genome Res.">
        <title>The status, quality, and expansion of the NIH full-length cDNA project: the Mammalian Gene Collection (MGC).</title>
        <authorList>
            <consortium name="The MGC Project Team"/>
        </authorList>
    </citation>
    <scope>NUCLEOTIDE SEQUENCE [LARGE SCALE MRNA]</scope>
    <source>
        <strain>C57BL/6J</strain>
        <tissue>Brain</tissue>
    </source>
</reference>
<reference key="3">
    <citation type="journal article" date="2010" name="Cell">
        <title>A tissue-specific atlas of mouse protein phosphorylation and expression.</title>
        <authorList>
            <person name="Huttlin E.L."/>
            <person name="Jedrychowski M.P."/>
            <person name="Elias J.E."/>
            <person name="Goswami T."/>
            <person name="Rad R."/>
            <person name="Beausoleil S.A."/>
            <person name="Villen J."/>
            <person name="Haas W."/>
            <person name="Sowa M.E."/>
            <person name="Gygi S.P."/>
        </authorList>
    </citation>
    <scope>IDENTIFICATION BY MASS SPECTROMETRY [LARGE SCALE ANALYSIS]</scope>
    <source>
        <tissue>Brain</tissue>
        <tissue>Brown adipose tissue</tissue>
        <tissue>Heart</tissue>
        <tissue>Kidney</tissue>
        <tissue>Liver</tissue>
        <tissue>Lung</tissue>
        <tissue>Pancreas</tissue>
        <tissue>Spleen</tissue>
        <tissue>Testis</tissue>
    </source>
</reference>
<sequence>MGDKPIWEQIGSSFIQHYYQLFDNDRTQLGAIYIDASCLTWEGQQFQGKAAIVEKLSSLPFQKIQHSITAQDHQPTPDSCIISMVVGQLKADEDPIMGFHQMFLLKNINDAWVCTNDMFRLALHNFG</sequence>
<organism>
    <name type="scientific">Mus musculus</name>
    <name type="common">Mouse</name>
    <dbReference type="NCBI Taxonomy" id="10090"/>
    <lineage>
        <taxon>Eukaryota</taxon>
        <taxon>Metazoa</taxon>
        <taxon>Chordata</taxon>
        <taxon>Craniata</taxon>
        <taxon>Vertebrata</taxon>
        <taxon>Euteleostomi</taxon>
        <taxon>Mammalia</taxon>
        <taxon>Eutheria</taxon>
        <taxon>Euarchontoglires</taxon>
        <taxon>Glires</taxon>
        <taxon>Rodentia</taxon>
        <taxon>Myomorpha</taxon>
        <taxon>Muroidea</taxon>
        <taxon>Muridae</taxon>
        <taxon>Murinae</taxon>
        <taxon>Mus</taxon>
        <taxon>Mus</taxon>
    </lineage>
</organism>
<proteinExistence type="evidence at protein level"/>
<comment type="function">
    <text evidence="1">Mediates the import of GDP-bound RAN from the cytoplasm into the nucleus which is essential for the function of RAN in cargo receptor-mediated nucleocytoplasmic transport. Thereby, plays indirectly a more general role in cargo receptor-mediated nucleocytoplasmic transport. Interacts with GDP-bound RAN in the cytosol, recruits it to the nuclear pore complex via its interaction with nucleoporins and promotes its nuclear import.</text>
</comment>
<comment type="subunit">
    <text evidence="1">Homodimer. Interacts with RAN (GDP-bound form); the interaction is direct and regulates RAN nuclear import. Interacts with the nucleoporins NUP54, NUP58 and NUP62 (via FG repeats); recruits NUTF2 to the nuclear pore complex a step required for NUTF2-mediated GDP-bound RAN nuclear import. Interacts with CAPG; mediates its nuclear import.</text>
</comment>
<comment type="subcellular location">
    <subcellularLocation>
        <location evidence="1">Cytoplasm</location>
        <location evidence="1">Cytosol</location>
    </subcellularLocation>
    <subcellularLocation>
        <location evidence="2">Nucleus outer membrane</location>
    </subcellularLocation>
    <subcellularLocation>
        <location evidence="2">Nucleus</location>
        <location evidence="2">Nuclear pore complex</location>
    </subcellularLocation>
    <subcellularLocation>
        <location evidence="2">Nucleus inner membrane</location>
    </subcellularLocation>
    <subcellularLocation>
        <location evidence="1">Nucleus</location>
        <location evidence="1">Nucleoplasm</location>
    </subcellularLocation>
    <text evidence="1">At steady state it is essentially nucleoplasmic, enriched in nucleoplasmic foci.</text>
</comment>
<name>NTF2_MOUSE</name>
<keyword id="KW-0007">Acetylation</keyword>
<keyword id="KW-0963">Cytoplasm</keyword>
<keyword id="KW-0472">Membrane</keyword>
<keyword id="KW-0509">mRNA transport</keyword>
<keyword id="KW-0906">Nuclear pore complex</keyword>
<keyword id="KW-0539">Nucleus</keyword>
<keyword id="KW-0653">Protein transport</keyword>
<keyword id="KW-1185">Reference proteome</keyword>
<keyword id="KW-0811">Translocation</keyword>
<keyword id="KW-0813">Transport</keyword>
<accession>P61971</accession>
<accession>P13662</accession>
<accession>Q3TI35</accession>
<dbReference type="EMBL" id="AK002461">
    <property type="protein sequence ID" value="BAB22117.1"/>
    <property type="molecule type" value="mRNA"/>
</dbReference>
<dbReference type="EMBL" id="AK012500">
    <property type="protein sequence ID" value="BAB28283.1"/>
    <property type="molecule type" value="mRNA"/>
</dbReference>
<dbReference type="EMBL" id="AK020512">
    <property type="protein sequence ID" value="BAB32122.1"/>
    <property type="molecule type" value="mRNA"/>
</dbReference>
<dbReference type="EMBL" id="AK028410">
    <property type="protein sequence ID" value="BAC25936.1"/>
    <property type="molecule type" value="mRNA"/>
</dbReference>
<dbReference type="EMBL" id="AK051049">
    <property type="protein sequence ID" value="BAC34511.1"/>
    <property type="molecule type" value="mRNA"/>
</dbReference>
<dbReference type="EMBL" id="AK168026">
    <property type="protein sequence ID" value="BAE40011.1"/>
    <property type="molecule type" value="mRNA"/>
</dbReference>
<dbReference type="EMBL" id="BC003955">
    <property type="protein sequence ID" value="AAH03955.1"/>
    <property type="molecule type" value="mRNA"/>
</dbReference>
<dbReference type="EMBL" id="BC083165">
    <property type="protein sequence ID" value="AAH83165.1"/>
    <property type="molecule type" value="mRNA"/>
</dbReference>
<dbReference type="EMBL" id="BC086773">
    <property type="protein sequence ID" value="AAH86773.1"/>
    <property type="molecule type" value="mRNA"/>
</dbReference>
<dbReference type="CCDS" id="CCDS22617.1"/>
<dbReference type="RefSeq" id="NP_001344158.1">
    <property type="nucleotide sequence ID" value="NM_001357229.1"/>
</dbReference>
<dbReference type="RefSeq" id="NP_001344159.1">
    <property type="nucleotide sequence ID" value="NM_001357230.1"/>
</dbReference>
<dbReference type="RefSeq" id="NP_080808.1">
    <property type="nucleotide sequence ID" value="NM_026532.4"/>
</dbReference>
<dbReference type="RefSeq" id="XP_001474007.1">
    <property type="nucleotide sequence ID" value="XM_001473957.5"/>
</dbReference>
<dbReference type="RefSeq" id="XP_006531388.1">
    <property type="nucleotide sequence ID" value="XM_006531325.3"/>
</dbReference>
<dbReference type="BMRB" id="P61971"/>
<dbReference type="SMR" id="P61971"/>
<dbReference type="BioGRID" id="212629">
    <property type="interactions" value="5"/>
</dbReference>
<dbReference type="FunCoup" id="P61971">
    <property type="interactions" value="3813"/>
</dbReference>
<dbReference type="IntAct" id="P61971">
    <property type="interactions" value="1"/>
</dbReference>
<dbReference type="STRING" id="10090.ENSMUSP00000008594"/>
<dbReference type="iPTMnet" id="P61971"/>
<dbReference type="PhosphoSitePlus" id="P61971"/>
<dbReference type="SwissPalm" id="P61971"/>
<dbReference type="jPOST" id="P61971"/>
<dbReference type="PaxDb" id="10090-ENSMUSP00000008594"/>
<dbReference type="PeptideAtlas" id="P61971"/>
<dbReference type="ProteomicsDB" id="287833"/>
<dbReference type="Pumba" id="P61971"/>
<dbReference type="DNASU" id="68051"/>
<dbReference type="Ensembl" id="ENSMUST00000008594.9">
    <property type="protein sequence ID" value="ENSMUSP00000008594.8"/>
    <property type="gene ID" value="ENSMUSG00000008450.9"/>
</dbReference>
<dbReference type="Ensembl" id="ENSMUST00000095978.5">
    <property type="protein sequence ID" value="ENSMUSP00000131850.3"/>
    <property type="gene ID" value="ENSMUSG00000071497.5"/>
</dbReference>
<dbReference type="Ensembl" id="ENSMUST00000212042.2">
    <property type="protein sequence ID" value="ENSMUSP00000148713.2"/>
    <property type="gene ID" value="ENSMUSG00000008450.9"/>
</dbReference>
<dbReference type="GeneID" id="68051"/>
<dbReference type="KEGG" id="mmu:68051"/>
<dbReference type="UCSC" id="uc009nej.1">
    <property type="organism name" value="mouse"/>
</dbReference>
<dbReference type="AGR" id="MGI:1915301"/>
<dbReference type="CTD" id="10204"/>
<dbReference type="MGI" id="MGI:1915301">
    <property type="gene designation" value="Nutf2"/>
</dbReference>
<dbReference type="VEuPathDB" id="HostDB:ENSMUSG00000008450"/>
<dbReference type="VEuPathDB" id="HostDB:ENSMUSG00000071497"/>
<dbReference type="eggNOG" id="KOG2104">
    <property type="taxonomic scope" value="Eukaryota"/>
</dbReference>
<dbReference type="GeneTree" id="ENSGT00510000047030"/>
<dbReference type="HOGENOM" id="CLU_131642_1_1_1"/>
<dbReference type="InParanoid" id="P61971"/>
<dbReference type="OMA" id="QFVEYYY"/>
<dbReference type="OrthoDB" id="6507044at2759"/>
<dbReference type="PhylomeDB" id="P61971"/>
<dbReference type="TreeFam" id="TF314422"/>
<dbReference type="BioGRID-ORCS" id="68051">
    <property type="hits" value="26 hits in 58 CRISPR screens"/>
</dbReference>
<dbReference type="ChiTaRS" id="Nutf2">
    <property type="organism name" value="mouse"/>
</dbReference>
<dbReference type="PRO" id="PR:P61971"/>
<dbReference type="Proteomes" id="UP000000589">
    <property type="component" value="Chromosome 19"/>
</dbReference>
<dbReference type="Proteomes" id="UP000000589">
    <property type="component" value="Chromosome 8"/>
</dbReference>
<dbReference type="RNAct" id="P61971">
    <property type="molecule type" value="protein"/>
</dbReference>
<dbReference type="Bgee" id="ENSMUSG00000008450">
    <property type="expression patterns" value="Expressed in yolk sac and 281 other cell types or tissues"/>
</dbReference>
<dbReference type="ExpressionAtlas" id="P61971">
    <property type="expression patterns" value="baseline and differential"/>
</dbReference>
<dbReference type="GO" id="GO:0005829">
    <property type="term" value="C:cytosol"/>
    <property type="evidence" value="ECO:0000250"/>
    <property type="project" value="UniProtKB"/>
</dbReference>
<dbReference type="GO" id="GO:0005637">
    <property type="term" value="C:nuclear inner membrane"/>
    <property type="evidence" value="ECO:0007669"/>
    <property type="project" value="UniProtKB-SubCell"/>
</dbReference>
<dbReference type="GO" id="GO:0031965">
    <property type="term" value="C:nuclear membrane"/>
    <property type="evidence" value="ECO:0000250"/>
    <property type="project" value="UniProtKB"/>
</dbReference>
<dbReference type="GO" id="GO:0005640">
    <property type="term" value="C:nuclear outer membrane"/>
    <property type="evidence" value="ECO:0007669"/>
    <property type="project" value="UniProtKB-SubCell"/>
</dbReference>
<dbReference type="GO" id="GO:0005643">
    <property type="term" value="C:nuclear pore"/>
    <property type="evidence" value="ECO:0007669"/>
    <property type="project" value="UniProtKB-SubCell"/>
</dbReference>
<dbReference type="GO" id="GO:0005654">
    <property type="term" value="C:nucleoplasm"/>
    <property type="evidence" value="ECO:0000250"/>
    <property type="project" value="UniProtKB"/>
</dbReference>
<dbReference type="GO" id="GO:0061608">
    <property type="term" value="F:nuclear import signal receptor activity"/>
    <property type="evidence" value="ECO:0000250"/>
    <property type="project" value="UniProtKB"/>
</dbReference>
<dbReference type="GO" id="GO:0031267">
    <property type="term" value="F:small GTPase binding"/>
    <property type="evidence" value="ECO:0000250"/>
    <property type="project" value="UniProtKB"/>
</dbReference>
<dbReference type="GO" id="GO:0051028">
    <property type="term" value="P:mRNA transport"/>
    <property type="evidence" value="ECO:0007669"/>
    <property type="project" value="UniProtKB-KW"/>
</dbReference>
<dbReference type="GO" id="GO:0006606">
    <property type="term" value="P:protein import into nucleus"/>
    <property type="evidence" value="ECO:0000314"/>
    <property type="project" value="MGI"/>
</dbReference>
<dbReference type="GO" id="GO:0090204">
    <property type="term" value="P:protein localization to nuclear pore"/>
    <property type="evidence" value="ECO:0000250"/>
    <property type="project" value="UniProtKB"/>
</dbReference>
<dbReference type="CDD" id="cd00780">
    <property type="entry name" value="NTF2"/>
    <property type="match status" value="1"/>
</dbReference>
<dbReference type="FunFam" id="3.10.450.50:FF:000007">
    <property type="entry name" value="Nuclear transport factor 2"/>
    <property type="match status" value="1"/>
</dbReference>
<dbReference type="Gene3D" id="3.10.450.50">
    <property type="match status" value="1"/>
</dbReference>
<dbReference type="InterPro" id="IPR045875">
    <property type="entry name" value="NTF2"/>
</dbReference>
<dbReference type="InterPro" id="IPR032710">
    <property type="entry name" value="NTF2-like_dom_sf"/>
</dbReference>
<dbReference type="InterPro" id="IPR002075">
    <property type="entry name" value="NTF2_dom"/>
</dbReference>
<dbReference type="InterPro" id="IPR018222">
    <property type="entry name" value="Nuclear_transport_factor_2_euk"/>
</dbReference>
<dbReference type="PANTHER" id="PTHR12612">
    <property type="entry name" value="NUCLEAR TRANSPORT FACTOR 2"/>
    <property type="match status" value="1"/>
</dbReference>
<dbReference type="Pfam" id="PF02136">
    <property type="entry name" value="NTF2"/>
    <property type="match status" value="1"/>
</dbReference>
<dbReference type="SUPFAM" id="SSF54427">
    <property type="entry name" value="NTF2-like"/>
    <property type="match status" value="1"/>
</dbReference>
<dbReference type="PROSITE" id="PS50177">
    <property type="entry name" value="NTF2_DOMAIN"/>
    <property type="match status" value="1"/>
</dbReference>